<comment type="function">
    <text evidence="1">Cleaves peptides in various proteins in a process that requires ATP hydrolysis. Has a chymotrypsin-like activity. Plays a major role in the degradation of misfolded proteins.</text>
</comment>
<comment type="catalytic activity">
    <reaction evidence="1">
        <text>Hydrolysis of proteins to small peptides in the presence of ATP and magnesium. alpha-casein is the usual test substrate. In the absence of ATP, only oligopeptides shorter than five residues are hydrolyzed (such as succinyl-Leu-Tyr-|-NHMec, and Leu-Tyr-Leu-|-Tyr-Trp, in which cleavage of the -Tyr-|-Leu- and -Tyr-|-Trp bonds also occurs).</text>
        <dbReference type="EC" id="3.4.21.92"/>
    </reaction>
</comment>
<comment type="subunit">
    <text evidence="1">Fourteen ClpP subunits assemble into 2 heptameric rings which stack back to back to give a disk-like structure with a central cavity, resembling the structure of eukaryotic proteasomes.</text>
</comment>
<comment type="subcellular location">
    <subcellularLocation>
        <location evidence="1">Cytoplasm</location>
    </subcellularLocation>
</comment>
<comment type="similarity">
    <text evidence="1">Belongs to the peptidase S14 family.</text>
</comment>
<protein>
    <recommendedName>
        <fullName evidence="1">ATP-dependent Clp protease proteolytic subunit</fullName>
        <ecNumber evidence="1">3.4.21.92</ecNumber>
    </recommendedName>
    <alternativeName>
        <fullName evidence="1">Endopeptidase Clp</fullName>
    </alternativeName>
</protein>
<evidence type="ECO:0000255" key="1">
    <source>
        <dbReference type="HAMAP-Rule" id="MF_00444"/>
    </source>
</evidence>
<dbReference type="EC" id="3.4.21.92" evidence="1"/>
<dbReference type="EMBL" id="AE008923">
    <property type="protein sequence ID" value="AAM35956.1"/>
    <property type="molecule type" value="Genomic_DNA"/>
</dbReference>
<dbReference type="RefSeq" id="WP_002806026.1">
    <property type="nucleotide sequence ID" value="NC_003919.1"/>
</dbReference>
<dbReference type="SMR" id="Q8PNI5"/>
<dbReference type="MEROPS" id="S14.001"/>
<dbReference type="GeneID" id="97509417"/>
<dbReference type="KEGG" id="xac:XAC1078"/>
<dbReference type="eggNOG" id="COG0740">
    <property type="taxonomic scope" value="Bacteria"/>
</dbReference>
<dbReference type="HOGENOM" id="CLU_058707_3_2_6"/>
<dbReference type="Proteomes" id="UP000000576">
    <property type="component" value="Chromosome"/>
</dbReference>
<dbReference type="GO" id="GO:0005737">
    <property type="term" value="C:cytoplasm"/>
    <property type="evidence" value="ECO:0007669"/>
    <property type="project" value="UniProtKB-SubCell"/>
</dbReference>
<dbReference type="GO" id="GO:0009368">
    <property type="term" value="C:endopeptidase Clp complex"/>
    <property type="evidence" value="ECO:0007669"/>
    <property type="project" value="TreeGrafter"/>
</dbReference>
<dbReference type="GO" id="GO:0004176">
    <property type="term" value="F:ATP-dependent peptidase activity"/>
    <property type="evidence" value="ECO:0007669"/>
    <property type="project" value="InterPro"/>
</dbReference>
<dbReference type="GO" id="GO:0051117">
    <property type="term" value="F:ATPase binding"/>
    <property type="evidence" value="ECO:0007669"/>
    <property type="project" value="TreeGrafter"/>
</dbReference>
<dbReference type="GO" id="GO:0004252">
    <property type="term" value="F:serine-type endopeptidase activity"/>
    <property type="evidence" value="ECO:0007669"/>
    <property type="project" value="UniProtKB-UniRule"/>
</dbReference>
<dbReference type="GO" id="GO:0006515">
    <property type="term" value="P:protein quality control for misfolded or incompletely synthesized proteins"/>
    <property type="evidence" value="ECO:0007669"/>
    <property type="project" value="TreeGrafter"/>
</dbReference>
<dbReference type="CDD" id="cd07017">
    <property type="entry name" value="S14_ClpP_2"/>
    <property type="match status" value="1"/>
</dbReference>
<dbReference type="FunFam" id="3.90.226.10:FF:000001">
    <property type="entry name" value="ATP-dependent Clp protease proteolytic subunit"/>
    <property type="match status" value="1"/>
</dbReference>
<dbReference type="Gene3D" id="3.90.226.10">
    <property type="entry name" value="2-enoyl-CoA Hydratase, Chain A, domain 1"/>
    <property type="match status" value="1"/>
</dbReference>
<dbReference type="HAMAP" id="MF_00444">
    <property type="entry name" value="ClpP"/>
    <property type="match status" value="1"/>
</dbReference>
<dbReference type="InterPro" id="IPR001907">
    <property type="entry name" value="ClpP"/>
</dbReference>
<dbReference type="InterPro" id="IPR029045">
    <property type="entry name" value="ClpP/crotonase-like_dom_sf"/>
</dbReference>
<dbReference type="InterPro" id="IPR023562">
    <property type="entry name" value="ClpP/TepA"/>
</dbReference>
<dbReference type="InterPro" id="IPR033135">
    <property type="entry name" value="ClpP_His_AS"/>
</dbReference>
<dbReference type="InterPro" id="IPR018215">
    <property type="entry name" value="ClpP_Ser_AS"/>
</dbReference>
<dbReference type="NCBIfam" id="TIGR00493">
    <property type="entry name" value="clpP"/>
    <property type="match status" value="1"/>
</dbReference>
<dbReference type="NCBIfam" id="NF001368">
    <property type="entry name" value="PRK00277.1"/>
    <property type="match status" value="1"/>
</dbReference>
<dbReference type="NCBIfam" id="NF009205">
    <property type="entry name" value="PRK12553.1"/>
    <property type="match status" value="1"/>
</dbReference>
<dbReference type="PANTHER" id="PTHR10381">
    <property type="entry name" value="ATP-DEPENDENT CLP PROTEASE PROTEOLYTIC SUBUNIT"/>
    <property type="match status" value="1"/>
</dbReference>
<dbReference type="PANTHER" id="PTHR10381:SF70">
    <property type="entry name" value="ATP-DEPENDENT CLP PROTEASE PROTEOLYTIC SUBUNIT"/>
    <property type="match status" value="1"/>
</dbReference>
<dbReference type="Pfam" id="PF00574">
    <property type="entry name" value="CLP_protease"/>
    <property type="match status" value="1"/>
</dbReference>
<dbReference type="PRINTS" id="PR00127">
    <property type="entry name" value="CLPPROTEASEP"/>
</dbReference>
<dbReference type="SUPFAM" id="SSF52096">
    <property type="entry name" value="ClpP/crotonase"/>
    <property type="match status" value="1"/>
</dbReference>
<dbReference type="PROSITE" id="PS00382">
    <property type="entry name" value="CLP_PROTEASE_HIS"/>
    <property type="match status" value="1"/>
</dbReference>
<dbReference type="PROSITE" id="PS00381">
    <property type="entry name" value="CLP_PROTEASE_SER"/>
    <property type="match status" value="1"/>
</dbReference>
<feature type="chain" id="PRO_0000179719" description="ATP-dependent Clp protease proteolytic subunit">
    <location>
        <begin position="1"/>
        <end position="208"/>
    </location>
</feature>
<feature type="active site" description="Nucleophile" evidence="1">
    <location>
        <position position="105"/>
    </location>
</feature>
<feature type="active site" evidence="1">
    <location>
        <position position="130"/>
    </location>
</feature>
<accession>Q8PNI5</accession>
<organism>
    <name type="scientific">Xanthomonas axonopodis pv. citri (strain 306)</name>
    <dbReference type="NCBI Taxonomy" id="190486"/>
    <lineage>
        <taxon>Bacteria</taxon>
        <taxon>Pseudomonadati</taxon>
        <taxon>Pseudomonadota</taxon>
        <taxon>Gammaproteobacteria</taxon>
        <taxon>Lysobacterales</taxon>
        <taxon>Lysobacteraceae</taxon>
        <taxon>Xanthomonas</taxon>
    </lineage>
</organism>
<keyword id="KW-0963">Cytoplasm</keyword>
<keyword id="KW-0378">Hydrolase</keyword>
<keyword id="KW-0645">Protease</keyword>
<keyword id="KW-0720">Serine protease</keyword>
<reference key="1">
    <citation type="journal article" date="2002" name="Nature">
        <title>Comparison of the genomes of two Xanthomonas pathogens with differing host specificities.</title>
        <authorList>
            <person name="da Silva A.C.R."/>
            <person name="Ferro J.A."/>
            <person name="Reinach F.C."/>
            <person name="Farah C.S."/>
            <person name="Furlan L.R."/>
            <person name="Quaggio R.B."/>
            <person name="Monteiro-Vitorello C.B."/>
            <person name="Van Sluys M.A."/>
            <person name="Almeida N.F. Jr."/>
            <person name="Alves L.M.C."/>
            <person name="do Amaral A.M."/>
            <person name="Bertolini M.C."/>
            <person name="Camargo L.E.A."/>
            <person name="Camarotte G."/>
            <person name="Cannavan F."/>
            <person name="Cardozo J."/>
            <person name="Chambergo F."/>
            <person name="Ciapina L.P."/>
            <person name="Cicarelli R.M.B."/>
            <person name="Coutinho L.L."/>
            <person name="Cursino-Santos J.R."/>
            <person name="El-Dorry H."/>
            <person name="Faria J.B."/>
            <person name="Ferreira A.J.S."/>
            <person name="Ferreira R.C.C."/>
            <person name="Ferro M.I.T."/>
            <person name="Formighieri E.F."/>
            <person name="Franco M.C."/>
            <person name="Greggio C.C."/>
            <person name="Gruber A."/>
            <person name="Katsuyama A.M."/>
            <person name="Kishi L.T."/>
            <person name="Leite R.P."/>
            <person name="Lemos E.G.M."/>
            <person name="Lemos M.V.F."/>
            <person name="Locali E.C."/>
            <person name="Machado M.A."/>
            <person name="Madeira A.M.B.N."/>
            <person name="Martinez-Rossi N.M."/>
            <person name="Martins E.C."/>
            <person name="Meidanis J."/>
            <person name="Menck C.F.M."/>
            <person name="Miyaki C.Y."/>
            <person name="Moon D.H."/>
            <person name="Moreira L.M."/>
            <person name="Novo M.T.M."/>
            <person name="Okura V.K."/>
            <person name="Oliveira M.C."/>
            <person name="Oliveira V.R."/>
            <person name="Pereira H.A."/>
            <person name="Rossi A."/>
            <person name="Sena J.A.D."/>
            <person name="Silva C."/>
            <person name="de Souza R.F."/>
            <person name="Spinola L.A.F."/>
            <person name="Takita M.A."/>
            <person name="Tamura R.E."/>
            <person name="Teixeira E.C."/>
            <person name="Tezza R.I.D."/>
            <person name="Trindade dos Santos M."/>
            <person name="Truffi D."/>
            <person name="Tsai S.M."/>
            <person name="White F.F."/>
            <person name="Setubal J.C."/>
            <person name="Kitajima J.P."/>
        </authorList>
    </citation>
    <scope>NUCLEOTIDE SEQUENCE [LARGE SCALE GENOMIC DNA]</scope>
    <source>
        <strain>306</strain>
    </source>
</reference>
<name>CLPP_XANAC</name>
<proteinExistence type="inferred from homology"/>
<gene>
    <name evidence="1" type="primary">clpP</name>
    <name type="ordered locus">XAC1078</name>
</gene>
<sequence>MSIVTKALNLVPMVVEQTSRGERAYDIYSRLLKERLIFLVGPIDDHMANVIVAQLLFLEADNPEKDISIYINSPGGVVTAGMAIYDTMQYIKPDVSTICVGQAASMGALLLASGAAGKRYALPNSRVMIHQPLGGFQGQATDIDIHAREILTLRSRLNEILAKHTGQSLETIARDTERDNFKSAVDAQAYGLVDQVLERRPEESIQPS</sequence>